<comment type="function">
    <text evidence="1">NAD-binding protein involved in the addition of a carboxymethylaminomethyl (cmnm) group at the wobble position (U34) of certain tRNAs, forming tRNA-cmnm(5)s(2)U34.</text>
</comment>
<comment type="cofactor">
    <cofactor evidence="1">
        <name>FAD</name>
        <dbReference type="ChEBI" id="CHEBI:57692"/>
    </cofactor>
</comment>
<comment type="subunit">
    <text evidence="1">Homodimer. Heterotetramer of two MnmE and two MnmG subunits.</text>
</comment>
<comment type="subcellular location">
    <subcellularLocation>
        <location evidence="1">Cytoplasm</location>
    </subcellularLocation>
</comment>
<comment type="similarity">
    <text evidence="1">Belongs to the MnmG family.</text>
</comment>
<feature type="chain" id="PRO_1000076325" description="tRNA uridine 5-carboxymethylaminomethyl modification enzyme MnmG">
    <location>
        <begin position="1"/>
        <end position="621"/>
    </location>
</feature>
<feature type="binding site" evidence="1">
    <location>
        <begin position="8"/>
        <end position="13"/>
    </location>
    <ligand>
        <name>FAD</name>
        <dbReference type="ChEBI" id="CHEBI:57692"/>
    </ligand>
</feature>
<feature type="binding site" evidence="1">
    <location>
        <begin position="269"/>
        <end position="283"/>
    </location>
    <ligand>
        <name>NAD(+)</name>
        <dbReference type="ChEBI" id="CHEBI:57540"/>
    </ligand>
</feature>
<gene>
    <name evidence="1" type="primary">mnmG</name>
    <name evidence="1" type="synonym">gidA</name>
    <name type="ordered locus">Cvib_0007</name>
</gene>
<protein>
    <recommendedName>
        <fullName evidence="1">tRNA uridine 5-carboxymethylaminomethyl modification enzyme MnmG</fullName>
    </recommendedName>
    <alternativeName>
        <fullName evidence="1">Glucose-inhibited division protein A</fullName>
    </alternativeName>
</protein>
<dbReference type="EMBL" id="CP000607">
    <property type="protein sequence ID" value="ABP36036.1"/>
    <property type="molecule type" value="Genomic_DNA"/>
</dbReference>
<dbReference type="SMR" id="A4SC27"/>
<dbReference type="STRING" id="290318.Cvib_0007"/>
<dbReference type="KEGG" id="pvi:Cvib_0007"/>
<dbReference type="eggNOG" id="COG0445">
    <property type="taxonomic scope" value="Bacteria"/>
</dbReference>
<dbReference type="HOGENOM" id="CLU_007831_2_2_10"/>
<dbReference type="OrthoDB" id="9815560at2"/>
<dbReference type="GO" id="GO:0005829">
    <property type="term" value="C:cytosol"/>
    <property type="evidence" value="ECO:0007669"/>
    <property type="project" value="TreeGrafter"/>
</dbReference>
<dbReference type="GO" id="GO:0050660">
    <property type="term" value="F:flavin adenine dinucleotide binding"/>
    <property type="evidence" value="ECO:0007669"/>
    <property type="project" value="UniProtKB-UniRule"/>
</dbReference>
<dbReference type="GO" id="GO:0030488">
    <property type="term" value="P:tRNA methylation"/>
    <property type="evidence" value="ECO:0007669"/>
    <property type="project" value="TreeGrafter"/>
</dbReference>
<dbReference type="GO" id="GO:0002098">
    <property type="term" value="P:tRNA wobble uridine modification"/>
    <property type="evidence" value="ECO:0007669"/>
    <property type="project" value="InterPro"/>
</dbReference>
<dbReference type="FunFam" id="1.10.150.570:FF:000001">
    <property type="entry name" value="tRNA uridine 5-carboxymethylaminomethyl modification enzyme MnmG"/>
    <property type="match status" value="1"/>
</dbReference>
<dbReference type="FunFam" id="3.50.50.60:FF:000002">
    <property type="entry name" value="tRNA uridine 5-carboxymethylaminomethyl modification enzyme MnmG"/>
    <property type="match status" value="1"/>
</dbReference>
<dbReference type="Gene3D" id="3.50.50.60">
    <property type="entry name" value="FAD/NAD(P)-binding domain"/>
    <property type="match status" value="2"/>
</dbReference>
<dbReference type="Gene3D" id="1.10.150.570">
    <property type="entry name" value="GidA associated domain, C-terminal subdomain"/>
    <property type="match status" value="1"/>
</dbReference>
<dbReference type="Gene3D" id="1.10.10.1800">
    <property type="entry name" value="tRNA uridine 5-carboxymethylaminomethyl modification enzyme MnmG/GidA"/>
    <property type="match status" value="1"/>
</dbReference>
<dbReference type="HAMAP" id="MF_00129">
    <property type="entry name" value="MnmG_GidA"/>
    <property type="match status" value="1"/>
</dbReference>
<dbReference type="InterPro" id="IPR036188">
    <property type="entry name" value="FAD/NAD-bd_sf"/>
</dbReference>
<dbReference type="InterPro" id="IPR049312">
    <property type="entry name" value="GIDA_C_N"/>
</dbReference>
<dbReference type="InterPro" id="IPR004416">
    <property type="entry name" value="MnmG"/>
</dbReference>
<dbReference type="InterPro" id="IPR002218">
    <property type="entry name" value="MnmG-rel"/>
</dbReference>
<dbReference type="InterPro" id="IPR020595">
    <property type="entry name" value="MnmG-rel_CS"/>
</dbReference>
<dbReference type="InterPro" id="IPR026904">
    <property type="entry name" value="MnmG_C"/>
</dbReference>
<dbReference type="InterPro" id="IPR047001">
    <property type="entry name" value="MnmG_C_subdom"/>
</dbReference>
<dbReference type="InterPro" id="IPR044920">
    <property type="entry name" value="MnmG_C_subdom_sf"/>
</dbReference>
<dbReference type="InterPro" id="IPR040131">
    <property type="entry name" value="MnmG_N"/>
</dbReference>
<dbReference type="NCBIfam" id="TIGR00136">
    <property type="entry name" value="mnmG_gidA"/>
    <property type="match status" value="1"/>
</dbReference>
<dbReference type="PANTHER" id="PTHR11806">
    <property type="entry name" value="GLUCOSE INHIBITED DIVISION PROTEIN A"/>
    <property type="match status" value="1"/>
</dbReference>
<dbReference type="PANTHER" id="PTHR11806:SF0">
    <property type="entry name" value="PROTEIN MTO1 HOMOLOG, MITOCHONDRIAL"/>
    <property type="match status" value="1"/>
</dbReference>
<dbReference type="Pfam" id="PF01134">
    <property type="entry name" value="GIDA"/>
    <property type="match status" value="1"/>
</dbReference>
<dbReference type="Pfam" id="PF21680">
    <property type="entry name" value="GIDA_C_1st"/>
    <property type="match status" value="1"/>
</dbReference>
<dbReference type="Pfam" id="PF13932">
    <property type="entry name" value="SAM_GIDA_C"/>
    <property type="match status" value="1"/>
</dbReference>
<dbReference type="SMART" id="SM01228">
    <property type="entry name" value="GIDA_assoc_3"/>
    <property type="match status" value="1"/>
</dbReference>
<dbReference type="SUPFAM" id="SSF51905">
    <property type="entry name" value="FAD/NAD(P)-binding domain"/>
    <property type="match status" value="1"/>
</dbReference>
<dbReference type="PROSITE" id="PS01280">
    <property type="entry name" value="GIDA_1"/>
    <property type="match status" value="1"/>
</dbReference>
<dbReference type="PROSITE" id="PS01281">
    <property type="entry name" value="GIDA_2"/>
    <property type="match status" value="1"/>
</dbReference>
<proteinExistence type="inferred from homology"/>
<accession>A4SC27</accession>
<name>MNMG_CHLPM</name>
<evidence type="ECO:0000255" key="1">
    <source>
        <dbReference type="HAMAP-Rule" id="MF_00129"/>
    </source>
</evidence>
<reference key="1">
    <citation type="submission" date="2007-03" db="EMBL/GenBank/DDBJ databases">
        <title>Complete sequence of Prosthecochloris vibrioformis DSM 265.</title>
        <authorList>
            <consortium name="US DOE Joint Genome Institute"/>
            <person name="Copeland A."/>
            <person name="Lucas S."/>
            <person name="Lapidus A."/>
            <person name="Barry K."/>
            <person name="Detter J.C."/>
            <person name="Glavina del Rio T."/>
            <person name="Hammon N."/>
            <person name="Israni S."/>
            <person name="Pitluck S."/>
            <person name="Schmutz J."/>
            <person name="Larimer F."/>
            <person name="Land M."/>
            <person name="Hauser L."/>
            <person name="Mikhailova N."/>
            <person name="Li T."/>
            <person name="Overmann J."/>
            <person name="Schuster S.C."/>
            <person name="Bryant D.A."/>
            <person name="Richardson P."/>
        </authorList>
    </citation>
    <scope>NUCLEOTIDE SEQUENCE [LARGE SCALE GENOMIC DNA]</scope>
    <source>
        <strain>DSM 265 / 1930</strain>
    </source>
</reference>
<keyword id="KW-0963">Cytoplasm</keyword>
<keyword id="KW-0274">FAD</keyword>
<keyword id="KW-0285">Flavoprotein</keyword>
<keyword id="KW-0520">NAD</keyword>
<keyword id="KW-0819">tRNA processing</keyword>
<organism>
    <name type="scientific">Chlorobium phaeovibrioides (strain DSM 265 / 1930)</name>
    <name type="common">Prosthecochloris vibrioformis (strain DSM 265)</name>
    <dbReference type="NCBI Taxonomy" id="290318"/>
    <lineage>
        <taxon>Bacteria</taxon>
        <taxon>Pseudomonadati</taxon>
        <taxon>Chlorobiota</taxon>
        <taxon>Chlorobiia</taxon>
        <taxon>Chlorobiales</taxon>
        <taxon>Chlorobiaceae</taxon>
        <taxon>Chlorobium/Pelodictyon group</taxon>
        <taxon>Chlorobium</taxon>
    </lineage>
</organism>
<sequence>MYDIIVAGAGHAGCEAALAAARSGSSCLLISSDLTAVARMSCNPAIGGVAKGQITREIDALGGEMAKAIDATGIQFRMLNLSKGPAMHSPRAQADRTAYTEYMKRVLEAETNLDLLQDTVTGIEVRGGQFFGVELQSGRILRAGAAILTCGTFLNGLIHIGMNHFPGGRTIAEPPVTGLTESLVAAGFTTARLKTGTPPRVDRRSIDYSIVIEQKGDENPPPFSFSSGSIAGKEQISCFLTKTTHKTHEILRTGFDRSPLFSGKVQGVGPRYCPSIEDKIHRFTERDSHHIFLEPEGFHTNEMYVNGFSTSLPEDIQIAGLQSIPGMEEVKMIRPGYAIEYDYFHPSQIRRSLETKAVENLYFAGQINGTSGYEEAAAQGLMAGINASRKLKELPPIHLQRSDAYIGVLIDDLVTKETNEPYRMFTSSAEHRLILRHDNADLRLRKFGHTAGLVDDDTYRETLSKDDEIVRMTAFLRSKTIPTTALYNLLPAESNRPMTGGQKAASALKRPGITLNRLFAALPDFAKEARLISSNPLVHEQVEINLAYEGYLKRELLQTEKVARLESLILPETFNYHSVTGLSSEGREKLLHFRPETLGQASRIMGVSPSDISVLMVRLGR</sequence>